<sequence>MKRLPAVAGSFYESDPKKLKMQIEWSFRHNIGPRDIPKQTYEKKKRDNLFFVVPHAGYIYSGPVAAHSYYYLVSEGRPDVVIILGPNHTGLGSYVSAWPKGEWETPLGSVKIDEEILMQLVKESEVIDLDEKSHLYEHSIEVQLPFLQHFFDDDFKIVPIVIMMQTPEIAEFLADAIYNVMQKNPDKDIVVLASSDMNHYDPHEITVKKDVEAIEKIQQLDYKGLYEVVEGKDVTLCGYGPIMVNLILAKKFGKKAYILKHATSGDTSGPKDSVVGYLAARFGS</sequence>
<reference key="1">
    <citation type="journal article" date="2009" name="Proc. Natl. Acad. Sci. U.S.A.">
        <title>Biogeography of the Sulfolobus islandicus pan-genome.</title>
        <authorList>
            <person name="Reno M.L."/>
            <person name="Held N.L."/>
            <person name="Fields C.J."/>
            <person name="Burke P.V."/>
            <person name="Whitaker R.J."/>
        </authorList>
    </citation>
    <scope>NUCLEOTIDE SEQUENCE [LARGE SCALE GENOMIC DNA]</scope>
    <source>
        <strain>Y.G.57.14 / Yellowstone #1</strain>
    </source>
</reference>
<gene>
    <name type="ordered locus">YG5714_2180</name>
</gene>
<protein>
    <recommendedName>
        <fullName evidence="1">MEMO1 family protein YG5714_2180</fullName>
    </recommendedName>
</protein>
<evidence type="ECO:0000255" key="1">
    <source>
        <dbReference type="HAMAP-Rule" id="MF_00055"/>
    </source>
</evidence>
<feature type="chain" id="PRO_1000202329" description="MEMO1 family protein YG5714_2180">
    <location>
        <begin position="1"/>
        <end position="284"/>
    </location>
</feature>
<organism>
    <name type="scientific">Saccharolobus islandicus (strain Y.G.57.14 / Yellowstone #1)</name>
    <name type="common">Sulfolobus islandicus</name>
    <dbReference type="NCBI Taxonomy" id="439386"/>
    <lineage>
        <taxon>Archaea</taxon>
        <taxon>Thermoproteota</taxon>
        <taxon>Thermoprotei</taxon>
        <taxon>Sulfolobales</taxon>
        <taxon>Sulfolobaceae</taxon>
        <taxon>Saccharolobus</taxon>
    </lineage>
</organism>
<dbReference type="EMBL" id="CP001403">
    <property type="protein sequence ID" value="ACP46429.1"/>
    <property type="molecule type" value="Genomic_DNA"/>
</dbReference>
<dbReference type="RefSeq" id="WP_012716494.1">
    <property type="nucleotide sequence ID" value="NC_012622.1"/>
</dbReference>
<dbReference type="SMR" id="C3N8S4"/>
<dbReference type="GeneID" id="7808081"/>
<dbReference type="KEGG" id="siy:YG5714_2180"/>
<dbReference type="HOGENOM" id="CLU_038085_2_0_2"/>
<dbReference type="Proteomes" id="UP000002308">
    <property type="component" value="Chromosome"/>
</dbReference>
<dbReference type="CDD" id="cd07361">
    <property type="entry name" value="MEMO_like"/>
    <property type="match status" value="1"/>
</dbReference>
<dbReference type="Gene3D" id="3.40.830.10">
    <property type="entry name" value="LigB-like"/>
    <property type="match status" value="1"/>
</dbReference>
<dbReference type="HAMAP" id="MF_00055">
    <property type="entry name" value="MEMO1"/>
    <property type="match status" value="1"/>
</dbReference>
<dbReference type="InterPro" id="IPR002737">
    <property type="entry name" value="MEMO1_fam"/>
</dbReference>
<dbReference type="NCBIfam" id="TIGR04336">
    <property type="entry name" value="AmmeMemoSam_B"/>
    <property type="match status" value="1"/>
</dbReference>
<dbReference type="PANTHER" id="PTHR11060">
    <property type="entry name" value="PROTEIN MEMO1"/>
    <property type="match status" value="1"/>
</dbReference>
<dbReference type="PANTHER" id="PTHR11060:SF0">
    <property type="entry name" value="PROTEIN MEMO1"/>
    <property type="match status" value="1"/>
</dbReference>
<dbReference type="Pfam" id="PF01875">
    <property type="entry name" value="Memo"/>
    <property type="match status" value="1"/>
</dbReference>
<comment type="similarity">
    <text evidence="1">Belongs to the MEMO1 family.</text>
</comment>
<proteinExistence type="inferred from homology"/>
<accession>C3N8S4</accession>
<name>Y2180_SACI7</name>